<name>IL5_CAVPO</name>
<feature type="signal peptide" evidence="1">
    <location>
        <begin position="1"/>
        <end position="19"/>
    </location>
</feature>
<feature type="chain" id="PRO_0000015556" description="Interleukin-5">
    <location>
        <begin position="20"/>
        <end position="135"/>
    </location>
</feature>
<feature type="glycosylation site" description="N-linked (GlcNAc...) asparagine" evidence="4">
    <location>
        <position position="48"/>
    </location>
</feature>
<feature type="glycosylation site" description="N-linked (GlcNAc...) asparagine" evidence="4">
    <location>
        <position position="77"/>
    </location>
</feature>
<feature type="glycosylation site" description="N-linked (GlcNAc...) asparagine" evidence="4">
    <location>
        <position position="91"/>
    </location>
</feature>
<feature type="disulfide bond" description="Interchain (with C-106)" evidence="1">
    <location>
        <position position="64"/>
    </location>
</feature>
<feature type="disulfide bond" description="Interchain (with C-64)" evidence="1">
    <location>
        <position position="106"/>
    </location>
</feature>
<accession>O08987</accession>
<sequence length="135" mass="15291">MRVLLQLGLLALGAVCVCAIPKQSATLRALVRETLTLLSTHRTLLKGNETLRISVPAHKNHQLCIEEIFQGIDTLKNQTTQGEALATLFQNLSLIKKHIDLQKQKCGEERRRVKQFLDYLQEFLAVINTEWTIEG</sequence>
<dbReference type="EMBL" id="U34588">
    <property type="protein sequence ID" value="AAB61357.1"/>
    <property type="molecule type" value="mRNA"/>
</dbReference>
<dbReference type="RefSeq" id="NP_001166441.1">
    <property type="nucleotide sequence ID" value="NM_001172970.1"/>
</dbReference>
<dbReference type="SMR" id="O08987"/>
<dbReference type="FunCoup" id="O08987">
    <property type="interactions" value="557"/>
</dbReference>
<dbReference type="STRING" id="10141.ENSCPOP00000004355"/>
<dbReference type="GlyCosmos" id="O08987">
    <property type="glycosylation" value="3 sites, No reported glycans"/>
</dbReference>
<dbReference type="Ensembl" id="ENSCPOT00000004891.3">
    <property type="protein sequence ID" value="ENSCPOP00000004355.2"/>
    <property type="gene ID" value="ENSCPOG00000004840.4"/>
</dbReference>
<dbReference type="GeneID" id="100135558"/>
<dbReference type="KEGG" id="cpoc:100135558"/>
<dbReference type="CTD" id="3567"/>
<dbReference type="VEuPathDB" id="HostDB:ENSCPOG00000004840"/>
<dbReference type="eggNOG" id="ENOG502RWD8">
    <property type="taxonomic scope" value="Eukaryota"/>
</dbReference>
<dbReference type="GeneTree" id="ENSGT00390000016991"/>
<dbReference type="HOGENOM" id="CLU_156269_0_0_1"/>
<dbReference type="InParanoid" id="O08987"/>
<dbReference type="OMA" id="VPTHKNH"/>
<dbReference type="OrthoDB" id="9446172at2759"/>
<dbReference type="TreeFam" id="TF338422"/>
<dbReference type="Proteomes" id="UP000005447">
    <property type="component" value="Unassembled WGS sequence"/>
</dbReference>
<dbReference type="Bgee" id="ENSCPOG00000004840">
    <property type="expression patterns" value="Expressed in pituitary gland"/>
</dbReference>
<dbReference type="GO" id="GO:0005615">
    <property type="term" value="C:extracellular space"/>
    <property type="evidence" value="ECO:0007669"/>
    <property type="project" value="UniProtKB-KW"/>
</dbReference>
<dbReference type="GO" id="GO:0005125">
    <property type="term" value="F:cytokine activity"/>
    <property type="evidence" value="ECO:0007669"/>
    <property type="project" value="UniProtKB-KW"/>
</dbReference>
<dbReference type="GO" id="GO:0008083">
    <property type="term" value="F:growth factor activity"/>
    <property type="evidence" value="ECO:0007669"/>
    <property type="project" value="UniProtKB-KW"/>
</dbReference>
<dbReference type="GO" id="GO:0005137">
    <property type="term" value="F:interleukin-5 receptor binding"/>
    <property type="evidence" value="ECO:0007669"/>
    <property type="project" value="InterPro"/>
</dbReference>
<dbReference type="GO" id="GO:0006955">
    <property type="term" value="P:immune response"/>
    <property type="evidence" value="ECO:0007669"/>
    <property type="project" value="InterPro"/>
</dbReference>
<dbReference type="GO" id="GO:0038043">
    <property type="term" value="P:interleukin-5-mediated signaling pathway"/>
    <property type="evidence" value="ECO:0007669"/>
    <property type="project" value="Ensembl"/>
</dbReference>
<dbReference type="GO" id="GO:0045893">
    <property type="term" value="P:positive regulation of DNA-templated transcription"/>
    <property type="evidence" value="ECO:0007669"/>
    <property type="project" value="Ensembl"/>
</dbReference>
<dbReference type="GO" id="GO:0002639">
    <property type="term" value="P:positive regulation of immunoglobulin production"/>
    <property type="evidence" value="ECO:0007669"/>
    <property type="project" value="Ensembl"/>
</dbReference>
<dbReference type="GO" id="GO:0071803">
    <property type="term" value="P:positive regulation of podosome assembly"/>
    <property type="evidence" value="ECO:0007669"/>
    <property type="project" value="Ensembl"/>
</dbReference>
<dbReference type="Gene3D" id="1.20.1250.10">
    <property type="match status" value="1"/>
</dbReference>
<dbReference type="InterPro" id="IPR009079">
    <property type="entry name" value="4_helix_cytokine-like_core"/>
</dbReference>
<dbReference type="InterPro" id="IPR000186">
    <property type="entry name" value="IL-5"/>
</dbReference>
<dbReference type="PANTHER" id="PTHR48491">
    <property type="entry name" value="INTERLEUKIN-5"/>
    <property type="match status" value="1"/>
</dbReference>
<dbReference type="PANTHER" id="PTHR48491:SF1">
    <property type="entry name" value="INTERLEUKIN-5"/>
    <property type="match status" value="1"/>
</dbReference>
<dbReference type="Pfam" id="PF02025">
    <property type="entry name" value="IL5"/>
    <property type="match status" value="1"/>
</dbReference>
<dbReference type="PRINTS" id="PR00432">
    <property type="entry name" value="INTERLEUKIN5"/>
</dbReference>
<dbReference type="SUPFAM" id="SSF47266">
    <property type="entry name" value="4-helical cytokines"/>
    <property type="match status" value="1"/>
</dbReference>
<comment type="function">
    <text evidence="2 3">Homodimeric cytokine expressed predominantly by T-lymphocytes and NK cells that plays an important role in the survival, differentiation, and chemotaxis of eosinophils. Also acts on activated and resting B-cells to induce immunoglobulin production, growth, and differentiation (By similarity). Mechanistically, exerts its biological effects through a receptor composed of IL5RA subunit and the cytokine receptor common subunit beta/CSF2RB. Binding to the receptor leads to activation of various kinases including LYN, SYK and JAK2 and thereby propagates signals through the RAS-MAPK and JAK-STAT5 pathways respectively (By similarity).</text>
</comment>
<comment type="subunit">
    <text evidence="2 3">Homodimer; disulfide-linked. Interacts with IL5RA. Interacts with CSF2RB.</text>
</comment>
<comment type="subcellular location">
    <subcellularLocation>
        <location evidence="2">Secreted</location>
    </subcellularLocation>
</comment>
<comment type="similarity">
    <text evidence="5">Belongs to the IL-5 family.</text>
</comment>
<proteinExistence type="evidence at transcript level"/>
<evidence type="ECO:0000250" key="1"/>
<evidence type="ECO:0000250" key="2">
    <source>
        <dbReference type="UniProtKB" id="P04401"/>
    </source>
</evidence>
<evidence type="ECO:0000250" key="3">
    <source>
        <dbReference type="UniProtKB" id="P05113"/>
    </source>
</evidence>
<evidence type="ECO:0000255" key="4"/>
<evidence type="ECO:0000305" key="5"/>
<keyword id="KW-0202">Cytokine</keyword>
<keyword id="KW-1015">Disulfide bond</keyword>
<keyword id="KW-0325">Glycoprotein</keyword>
<keyword id="KW-0339">Growth factor</keyword>
<keyword id="KW-1185">Reference proteome</keyword>
<keyword id="KW-0964">Secreted</keyword>
<keyword id="KW-0732">Signal</keyword>
<reference key="1">
    <citation type="journal article" date="1996" name="Am. J. Physiol.">
        <title>Production and characterization of guinea pig IL-5 in baculovirus-infected insect cells.</title>
        <authorList>
            <person name="Mansour M."/>
            <person name="Karmilowicz M."/>
            <person name="Hawrylik S.J."/>
            <person name="Nalcerio B."/>
            <person name="Angilly J."/>
            <person name="Conklyn M.J."/>
            <person name="Lilly C.M."/>
            <person name="Drazen J.M."/>
            <person name="Lee S.E."/>
            <person name="Auperin D.D."/>
            <person name="de Wet J.R."/>
            <person name="Cohan V.L."/>
            <person name="Showell H.J."/>
            <person name="Danley D.E."/>
        </authorList>
    </citation>
    <scope>NUCLEOTIDE SEQUENCE [MRNA]</scope>
</reference>
<protein>
    <recommendedName>
        <fullName>Interleukin-5</fullName>
        <shortName>IL-5</shortName>
    </recommendedName>
    <alternativeName>
        <fullName>Eosinophil differentiation factor</fullName>
    </alternativeName>
    <alternativeName>
        <fullName>T-cell replacing factor</fullName>
        <shortName>TRF</shortName>
    </alternativeName>
</protein>
<organism>
    <name type="scientific">Cavia porcellus</name>
    <name type="common">Guinea pig</name>
    <dbReference type="NCBI Taxonomy" id="10141"/>
    <lineage>
        <taxon>Eukaryota</taxon>
        <taxon>Metazoa</taxon>
        <taxon>Chordata</taxon>
        <taxon>Craniata</taxon>
        <taxon>Vertebrata</taxon>
        <taxon>Euteleostomi</taxon>
        <taxon>Mammalia</taxon>
        <taxon>Eutheria</taxon>
        <taxon>Euarchontoglires</taxon>
        <taxon>Glires</taxon>
        <taxon>Rodentia</taxon>
        <taxon>Hystricomorpha</taxon>
        <taxon>Caviidae</taxon>
        <taxon>Cavia</taxon>
    </lineage>
</organism>
<gene>
    <name type="primary">IL5</name>
</gene>